<comment type="function">
    <text evidence="1">Allows the formation of correctly charged Asn-tRNA(Asn) or Gln-tRNA(Gln) through the transamidation of misacylated Asp-tRNA(Asn) or Glu-tRNA(Gln) in organisms which lack either or both of asparaginyl-tRNA or glutaminyl-tRNA synthetases. The reaction takes place in the presence of glutamine and ATP through an activated phospho-Asp-tRNA(Asn) or phospho-Glu-tRNA(Gln).</text>
</comment>
<comment type="catalytic activity">
    <reaction evidence="1">
        <text>L-glutamyl-tRNA(Gln) + L-glutamine + ATP + H2O = L-glutaminyl-tRNA(Gln) + L-glutamate + ADP + phosphate + H(+)</text>
        <dbReference type="Rhea" id="RHEA:17521"/>
        <dbReference type="Rhea" id="RHEA-COMP:9681"/>
        <dbReference type="Rhea" id="RHEA-COMP:9684"/>
        <dbReference type="ChEBI" id="CHEBI:15377"/>
        <dbReference type="ChEBI" id="CHEBI:15378"/>
        <dbReference type="ChEBI" id="CHEBI:29985"/>
        <dbReference type="ChEBI" id="CHEBI:30616"/>
        <dbReference type="ChEBI" id="CHEBI:43474"/>
        <dbReference type="ChEBI" id="CHEBI:58359"/>
        <dbReference type="ChEBI" id="CHEBI:78520"/>
        <dbReference type="ChEBI" id="CHEBI:78521"/>
        <dbReference type="ChEBI" id="CHEBI:456216"/>
    </reaction>
</comment>
<comment type="catalytic activity">
    <reaction evidence="1">
        <text>L-aspartyl-tRNA(Asn) + L-glutamine + ATP + H2O = L-asparaginyl-tRNA(Asn) + L-glutamate + ADP + phosphate + 2 H(+)</text>
        <dbReference type="Rhea" id="RHEA:14513"/>
        <dbReference type="Rhea" id="RHEA-COMP:9674"/>
        <dbReference type="Rhea" id="RHEA-COMP:9677"/>
        <dbReference type="ChEBI" id="CHEBI:15377"/>
        <dbReference type="ChEBI" id="CHEBI:15378"/>
        <dbReference type="ChEBI" id="CHEBI:29985"/>
        <dbReference type="ChEBI" id="CHEBI:30616"/>
        <dbReference type="ChEBI" id="CHEBI:43474"/>
        <dbReference type="ChEBI" id="CHEBI:58359"/>
        <dbReference type="ChEBI" id="CHEBI:78515"/>
        <dbReference type="ChEBI" id="CHEBI:78516"/>
        <dbReference type="ChEBI" id="CHEBI:456216"/>
    </reaction>
</comment>
<comment type="subunit">
    <text evidence="1">Heterotrimer of A, B and C subunits.</text>
</comment>
<comment type="similarity">
    <text evidence="1">Belongs to the GatC family.</text>
</comment>
<dbReference type="EC" id="6.3.5.-" evidence="1"/>
<dbReference type="EMBL" id="CP000918">
    <property type="protein sequence ID" value="ACO16072.1"/>
    <property type="molecule type" value="Genomic_DNA"/>
</dbReference>
<dbReference type="RefSeq" id="WP_000705421.1">
    <property type="nucleotide sequence ID" value="NC_012468.1"/>
</dbReference>
<dbReference type="SMR" id="C1C5H3"/>
<dbReference type="KEGG" id="snm:SP70585_0507"/>
<dbReference type="HOGENOM" id="CLU_105899_1_2_9"/>
<dbReference type="Proteomes" id="UP000002211">
    <property type="component" value="Chromosome"/>
</dbReference>
<dbReference type="GO" id="GO:0050566">
    <property type="term" value="F:asparaginyl-tRNA synthase (glutamine-hydrolyzing) activity"/>
    <property type="evidence" value="ECO:0007669"/>
    <property type="project" value="RHEA"/>
</dbReference>
<dbReference type="GO" id="GO:0005524">
    <property type="term" value="F:ATP binding"/>
    <property type="evidence" value="ECO:0007669"/>
    <property type="project" value="UniProtKB-KW"/>
</dbReference>
<dbReference type="GO" id="GO:0050567">
    <property type="term" value="F:glutaminyl-tRNA synthase (glutamine-hydrolyzing) activity"/>
    <property type="evidence" value="ECO:0007669"/>
    <property type="project" value="UniProtKB-UniRule"/>
</dbReference>
<dbReference type="GO" id="GO:0070681">
    <property type="term" value="P:glutaminyl-tRNAGln biosynthesis via transamidation"/>
    <property type="evidence" value="ECO:0007669"/>
    <property type="project" value="TreeGrafter"/>
</dbReference>
<dbReference type="GO" id="GO:0006450">
    <property type="term" value="P:regulation of translational fidelity"/>
    <property type="evidence" value="ECO:0007669"/>
    <property type="project" value="InterPro"/>
</dbReference>
<dbReference type="GO" id="GO:0006412">
    <property type="term" value="P:translation"/>
    <property type="evidence" value="ECO:0007669"/>
    <property type="project" value="UniProtKB-UniRule"/>
</dbReference>
<dbReference type="Gene3D" id="1.10.20.60">
    <property type="entry name" value="Glu-tRNAGln amidotransferase C subunit, N-terminal domain"/>
    <property type="match status" value="1"/>
</dbReference>
<dbReference type="HAMAP" id="MF_00122">
    <property type="entry name" value="GatC"/>
    <property type="match status" value="1"/>
</dbReference>
<dbReference type="InterPro" id="IPR036113">
    <property type="entry name" value="Asp/Glu-ADT_sf_sub_c"/>
</dbReference>
<dbReference type="InterPro" id="IPR003837">
    <property type="entry name" value="GatC"/>
</dbReference>
<dbReference type="NCBIfam" id="TIGR00135">
    <property type="entry name" value="gatC"/>
    <property type="match status" value="1"/>
</dbReference>
<dbReference type="PANTHER" id="PTHR15004">
    <property type="entry name" value="GLUTAMYL-TRNA(GLN) AMIDOTRANSFERASE SUBUNIT C, MITOCHONDRIAL"/>
    <property type="match status" value="1"/>
</dbReference>
<dbReference type="PANTHER" id="PTHR15004:SF0">
    <property type="entry name" value="GLUTAMYL-TRNA(GLN) AMIDOTRANSFERASE SUBUNIT C, MITOCHONDRIAL"/>
    <property type="match status" value="1"/>
</dbReference>
<dbReference type="Pfam" id="PF02686">
    <property type="entry name" value="GatC"/>
    <property type="match status" value="1"/>
</dbReference>
<dbReference type="SUPFAM" id="SSF141000">
    <property type="entry name" value="Glu-tRNAGln amidotransferase C subunit"/>
    <property type="match status" value="1"/>
</dbReference>
<organism>
    <name type="scientific">Streptococcus pneumoniae (strain 70585)</name>
    <dbReference type="NCBI Taxonomy" id="488221"/>
    <lineage>
        <taxon>Bacteria</taxon>
        <taxon>Bacillati</taxon>
        <taxon>Bacillota</taxon>
        <taxon>Bacilli</taxon>
        <taxon>Lactobacillales</taxon>
        <taxon>Streptococcaceae</taxon>
        <taxon>Streptococcus</taxon>
    </lineage>
</organism>
<accession>C1C5H3</accession>
<keyword id="KW-0067">ATP-binding</keyword>
<keyword id="KW-0436">Ligase</keyword>
<keyword id="KW-0547">Nucleotide-binding</keyword>
<keyword id="KW-0648">Protein biosynthesis</keyword>
<protein>
    <recommendedName>
        <fullName evidence="1">Aspartyl/glutamyl-tRNA(Asn/Gln) amidotransferase subunit C</fullName>
        <shortName evidence="1">Asp/Glu-ADT subunit C</shortName>
        <ecNumber evidence="1">6.3.5.-</ecNumber>
    </recommendedName>
</protein>
<feature type="chain" id="PRO_1000122584" description="Aspartyl/glutamyl-tRNA(Asn/Gln) amidotransferase subunit C">
    <location>
        <begin position="1"/>
        <end position="100"/>
    </location>
</feature>
<proteinExistence type="inferred from homology"/>
<name>GATC_STRP7</name>
<evidence type="ECO:0000255" key="1">
    <source>
        <dbReference type="HAMAP-Rule" id="MF_00122"/>
    </source>
</evidence>
<gene>
    <name evidence="1" type="primary">gatC</name>
    <name type="ordered locus">SP70585_0507</name>
</gene>
<reference key="1">
    <citation type="journal article" date="2010" name="Genome Biol.">
        <title>Structure and dynamics of the pan-genome of Streptococcus pneumoniae and closely related species.</title>
        <authorList>
            <person name="Donati C."/>
            <person name="Hiller N.L."/>
            <person name="Tettelin H."/>
            <person name="Muzzi A."/>
            <person name="Croucher N.J."/>
            <person name="Angiuoli S.V."/>
            <person name="Oggioni M."/>
            <person name="Dunning Hotopp J.C."/>
            <person name="Hu F.Z."/>
            <person name="Riley D.R."/>
            <person name="Covacci A."/>
            <person name="Mitchell T.J."/>
            <person name="Bentley S.D."/>
            <person name="Kilian M."/>
            <person name="Ehrlich G.D."/>
            <person name="Rappuoli R."/>
            <person name="Moxon E.R."/>
            <person name="Masignani V."/>
        </authorList>
    </citation>
    <scope>NUCLEOTIDE SEQUENCE [LARGE SCALE GENOMIC DNA]</scope>
    <source>
        <strain>70585</strain>
    </source>
</reference>
<sequence length="100" mass="11044">MKITQEEVTHVANLSKLRFSEEETAAFATTLSKIVDMVELLGEVDTTGVAPTTTMADRKTVLRPDVAEEGTDRDRLFKNVPEQDNYYIKVPAILDDGGDA</sequence>